<proteinExistence type="inferred from homology"/>
<organism>
    <name type="scientific">Dichelobacter nodosus (strain VCS1703A)</name>
    <dbReference type="NCBI Taxonomy" id="246195"/>
    <lineage>
        <taxon>Bacteria</taxon>
        <taxon>Pseudomonadati</taxon>
        <taxon>Pseudomonadota</taxon>
        <taxon>Gammaproteobacteria</taxon>
        <taxon>Cardiobacteriales</taxon>
        <taxon>Cardiobacteriaceae</taxon>
        <taxon>Dichelobacter</taxon>
    </lineage>
</organism>
<dbReference type="EMBL" id="CP000513">
    <property type="protein sequence ID" value="ABQ14001.1"/>
    <property type="molecule type" value="Genomic_DNA"/>
</dbReference>
<dbReference type="RefSeq" id="WP_012031551.1">
    <property type="nucleotide sequence ID" value="NC_009446.1"/>
</dbReference>
<dbReference type="SMR" id="A5EX99"/>
<dbReference type="STRING" id="246195.DNO_1256"/>
<dbReference type="KEGG" id="dno:DNO_1256"/>
<dbReference type="eggNOG" id="COG0200">
    <property type="taxonomic scope" value="Bacteria"/>
</dbReference>
<dbReference type="HOGENOM" id="CLU_055188_4_2_6"/>
<dbReference type="OrthoDB" id="9810293at2"/>
<dbReference type="Proteomes" id="UP000000248">
    <property type="component" value="Chromosome"/>
</dbReference>
<dbReference type="GO" id="GO:0022625">
    <property type="term" value="C:cytosolic large ribosomal subunit"/>
    <property type="evidence" value="ECO:0007669"/>
    <property type="project" value="TreeGrafter"/>
</dbReference>
<dbReference type="GO" id="GO:0019843">
    <property type="term" value="F:rRNA binding"/>
    <property type="evidence" value="ECO:0007669"/>
    <property type="project" value="UniProtKB-UniRule"/>
</dbReference>
<dbReference type="GO" id="GO:0003735">
    <property type="term" value="F:structural constituent of ribosome"/>
    <property type="evidence" value="ECO:0007669"/>
    <property type="project" value="InterPro"/>
</dbReference>
<dbReference type="GO" id="GO:0006412">
    <property type="term" value="P:translation"/>
    <property type="evidence" value="ECO:0007669"/>
    <property type="project" value="UniProtKB-UniRule"/>
</dbReference>
<dbReference type="Gene3D" id="3.100.10.10">
    <property type="match status" value="1"/>
</dbReference>
<dbReference type="HAMAP" id="MF_01341">
    <property type="entry name" value="Ribosomal_uL15"/>
    <property type="match status" value="1"/>
</dbReference>
<dbReference type="InterPro" id="IPR030878">
    <property type="entry name" value="Ribosomal_uL15"/>
</dbReference>
<dbReference type="InterPro" id="IPR021131">
    <property type="entry name" value="Ribosomal_uL15/eL18"/>
</dbReference>
<dbReference type="InterPro" id="IPR036227">
    <property type="entry name" value="Ribosomal_uL15/eL18_sf"/>
</dbReference>
<dbReference type="InterPro" id="IPR005749">
    <property type="entry name" value="Ribosomal_uL15_bac-type"/>
</dbReference>
<dbReference type="NCBIfam" id="TIGR01071">
    <property type="entry name" value="rplO_bact"/>
    <property type="match status" value="1"/>
</dbReference>
<dbReference type="PANTHER" id="PTHR12934">
    <property type="entry name" value="50S RIBOSOMAL PROTEIN L15"/>
    <property type="match status" value="1"/>
</dbReference>
<dbReference type="PANTHER" id="PTHR12934:SF11">
    <property type="entry name" value="LARGE RIBOSOMAL SUBUNIT PROTEIN UL15M"/>
    <property type="match status" value="1"/>
</dbReference>
<dbReference type="Pfam" id="PF00828">
    <property type="entry name" value="Ribosomal_L27A"/>
    <property type="match status" value="1"/>
</dbReference>
<dbReference type="SUPFAM" id="SSF52080">
    <property type="entry name" value="Ribosomal proteins L15p and L18e"/>
    <property type="match status" value="1"/>
</dbReference>
<protein>
    <recommendedName>
        <fullName evidence="1">Large ribosomal subunit protein uL15</fullName>
    </recommendedName>
    <alternativeName>
        <fullName evidence="3">50S ribosomal protein L15</fullName>
    </alternativeName>
</protein>
<accession>A5EX99</accession>
<comment type="function">
    <text evidence="1">Binds to the 23S rRNA.</text>
</comment>
<comment type="subunit">
    <text evidence="1">Part of the 50S ribosomal subunit.</text>
</comment>
<comment type="similarity">
    <text evidence="1">Belongs to the universal ribosomal protein uL15 family.</text>
</comment>
<sequence length="144" mass="15055">MRFNELQPAKGSRFAGKRLGRGIGSGLGKTSGKGHKGQKARSGGYHKVGFEGGQMPLQRRLPKRGFRSLKKLGTARIRLSELQKIDAEVIDLNALKAAGLASERAVAAKVYLNGTISKAVTLRGVSISAGAKAALEAAGGSVEE</sequence>
<feature type="chain" id="PRO_1000054458" description="Large ribosomal subunit protein uL15">
    <location>
        <begin position="1"/>
        <end position="144"/>
    </location>
</feature>
<feature type="region of interest" description="Disordered" evidence="2">
    <location>
        <begin position="1"/>
        <end position="57"/>
    </location>
</feature>
<feature type="compositionally biased region" description="Gly residues" evidence="2">
    <location>
        <begin position="21"/>
        <end position="31"/>
    </location>
</feature>
<keyword id="KW-1185">Reference proteome</keyword>
<keyword id="KW-0687">Ribonucleoprotein</keyword>
<keyword id="KW-0689">Ribosomal protein</keyword>
<keyword id="KW-0694">RNA-binding</keyword>
<keyword id="KW-0699">rRNA-binding</keyword>
<name>RL15_DICNV</name>
<gene>
    <name evidence="1" type="primary">rplO</name>
    <name type="ordered locus">DNO_1256</name>
</gene>
<evidence type="ECO:0000255" key="1">
    <source>
        <dbReference type="HAMAP-Rule" id="MF_01341"/>
    </source>
</evidence>
<evidence type="ECO:0000256" key="2">
    <source>
        <dbReference type="SAM" id="MobiDB-lite"/>
    </source>
</evidence>
<evidence type="ECO:0000305" key="3"/>
<reference key="1">
    <citation type="journal article" date="2007" name="Nat. Biotechnol.">
        <title>Genome sequence and identification of candidate vaccine antigens from the animal pathogen Dichelobacter nodosus.</title>
        <authorList>
            <person name="Myers G.S.A."/>
            <person name="Parker D."/>
            <person name="Al-Hasani K."/>
            <person name="Kennan R.M."/>
            <person name="Seemann T."/>
            <person name="Ren Q."/>
            <person name="Badger J.H."/>
            <person name="Selengut J.D."/>
            <person name="Deboy R.T."/>
            <person name="Tettelin H."/>
            <person name="Boyce J.D."/>
            <person name="McCarl V.P."/>
            <person name="Han X."/>
            <person name="Nelson W.C."/>
            <person name="Madupu R."/>
            <person name="Mohamoud Y."/>
            <person name="Holley T."/>
            <person name="Fedorova N."/>
            <person name="Khouri H."/>
            <person name="Bottomley S.P."/>
            <person name="Whittington R.J."/>
            <person name="Adler B."/>
            <person name="Songer J.G."/>
            <person name="Rood J.I."/>
            <person name="Paulsen I.T."/>
        </authorList>
    </citation>
    <scope>NUCLEOTIDE SEQUENCE [LARGE SCALE GENOMIC DNA]</scope>
    <source>
        <strain>VCS1703A</strain>
    </source>
</reference>